<organism evidence="3">
    <name type="scientific">Arabidopsis thaliana</name>
    <name type="common">Mouse-ear cress</name>
    <dbReference type="NCBI Taxonomy" id="3702"/>
    <lineage>
        <taxon>Eukaryota</taxon>
        <taxon>Viridiplantae</taxon>
        <taxon>Streptophyta</taxon>
        <taxon>Embryophyta</taxon>
        <taxon>Tracheophyta</taxon>
        <taxon>Spermatophyta</taxon>
        <taxon>Magnoliopsida</taxon>
        <taxon>eudicotyledons</taxon>
        <taxon>Gunneridae</taxon>
        <taxon>Pentapetalae</taxon>
        <taxon>rosids</taxon>
        <taxon>malvids</taxon>
        <taxon>Brassicales</taxon>
        <taxon>Brassicaceae</taxon>
        <taxon>Camelineae</taxon>
        <taxon>Arabidopsis</taxon>
    </lineage>
</organism>
<dbReference type="EMBL" id="AF053747">
    <property type="status" value="NOT_ANNOTATED_CDS"/>
    <property type="molecule type" value="Genomic_DNA"/>
</dbReference>
<dbReference type="EMBL" id="AC021044">
    <property type="status" value="NOT_ANNOTATED_CDS"/>
    <property type="molecule type" value="Genomic_DNA"/>
</dbReference>
<dbReference type="EMBL" id="CP002684">
    <property type="protein sequence ID" value="AEE30959.1"/>
    <property type="molecule type" value="Genomic_DNA"/>
</dbReference>
<dbReference type="EMBL" id="DQ912249">
    <property type="protein sequence ID" value="ABK27951.1"/>
    <property type="status" value="ALT_SEQ"/>
    <property type="molecule type" value="mRNA"/>
</dbReference>
<dbReference type="EMBL" id="EF182785">
    <property type="status" value="NOT_ANNOTATED_CDS"/>
    <property type="molecule type" value="mRNA"/>
</dbReference>
<dbReference type="RefSeq" id="NP_001031101.1">
    <property type="nucleotide sequence ID" value="NM_001036024.3"/>
</dbReference>
<dbReference type="SMR" id="P82746"/>
<dbReference type="PaxDb" id="3702-AT1G28335.1"/>
<dbReference type="ProteomicsDB" id="224010"/>
<dbReference type="EnsemblPlants" id="AT1G28335.1">
    <property type="protein sequence ID" value="AT1G28335.1"/>
    <property type="gene ID" value="AT1G28335"/>
</dbReference>
<dbReference type="GeneID" id="3766807"/>
<dbReference type="Gramene" id="AT1G28335.1">
    <property type="protein sequence ID" value="AT1G28335.1"/>
    <property type="gene ID" value="AT1G28335"/>
</dbReference>
<dbReference type="KEGG" id="ath:AT1G28335"/>
<dbReference type="Araport" id="AT1G28335"/>
<dbReference type="TAIR" id="AT1G28335">
    <property type="gene designation" value="LCR31"/>
</dbReference>
<dbReference type="HOGENOM" id="CLU_2577134_0_0_1"/>
<dbReference type="InParanoid" id="P82746"/>
<dbReference type="OMA" id="RCEANCA"/>
<dbReference type="PRO" id="PR:P82746"/>
<dbReference type="Proteomes" id="UP000006548">
    <property type="component" value="Chromosome 1"/>
</dbReference>
<dbReference type="ExpressionAtlas" id="P82746">
    <property type="expression patterns" value="baseline"/>
</dbReference>
<dbReference type="GO" id="GO:0005576">
    <property type="term" value="C:extracellular region"/>
    <property type="evidence" value="ECO:0007669"/>
    <property type="project" value="UniProtKB-SubCell"/>
</dbReference>
<dbReference type="GO" id="GO:0050832">
    <property type="term" value="P:defense response to fungus"/>
    <property type="evidence" value="ECO:0007669"/>
    <property type="project" value="UniProtKB-KW"/>
</dbReference>
<dbReference type="GO" id="GO:0031640">
    <property type="term" value="P:killing of cells of another organism"/>
    <property type="evidence" value="ECO:0007669"/>
    <property type="project" value="UniProtKB-KW"/>
</dbReference>
<dbReference type="InterPro" id="IPR010851">
    <property type="entry name" value="DEFL"/>
</dbReference>
<dbReference type="Pfam" id="PF07333">
    <property type="entry name" value="SLR1-BP"/>
    <property type="match status" value="1"/>
</dbReference>
<accession>P82746</accession>
<accession>A0MJV0</accession>
<keyword id="KW-0929">Antimicrobial</keyword>
<keyword id="KW-1015">Disulfide bond</keyword>
<keyword id="KW-0295">Fungicide</keyword>
<keyword id="KW-0611">Plant defense</keyword>
<keyword id="KW-1185">Reference proteome</keyword>
<keyword id="KW-0964">Secreted</keyword>
<keyword id="KW-0732">Signal</keyword>
<sequence>MKNVSQVSVAVLLIFSILVLGIGVQGKVPCLSRMFNKNNTCSFLRCEANCARKYKGYGDCRPGDRPHDKKDSLFCFCNYPC</sequence>
<comment type="subcellular location">
    <subcellularLocation>
        <location evidence="1">Secreted</location>
    </subcellularLocation>
</comment>
<comment type="similarity">
    <text evidence="3">Belongs to the DEFL family.</text>
</comment>
<comment type="sequence caution" evidence="3">
    <conflict type="erroneous termination">
        <sequence resource="EMBL-CDS" id="ABK27951"/>
    </conflict>
    <text>Extended C-terminus.</text>
</comment>
<name>DF153_ARATH</name>
<feature type="signal peptide" evidence="2">
    <location>
        <begin position="1"/>
        <end position="26"/>
    </location>
</feature>
<feature type="chain" id="PRO_0000017270" description="Defensin-like protein 153">
    <location>
        <begin position="27"/>
        <end position="81"/>
    </location>
</feature>
<feature type="disulfide bond" evidence="1">
    <location>
        <begin position="30"/>
        <end position="81"/>
    </location>
</feature>
<feature type="disulfide bond" evidence="1">
    <location>
        <begin position="41"/>
        <end position="60"/>
    </location>
</feature>
<feature type="disulfide bond" evidence="1">
    <location>
        <begin position="46"/>
        <end position="75"/>
    </location>
</feature>
<feature type="disulfide bond" evidence="1">
    <location>
        <begin position="50"/>
        <end position="77"/>
    </location>
</feature>
<protein>
    <recommendedName>
        <fullName>Defensin-like protein 153</fullName>
    </recommendedName>
    <alternativeName>
        <fullName>Low-molecular-weight cysteine-rich protein 31</fullName>
        <shortName>Protein LCR31</shortName>
    </alternativeName>
</protein>
<reference key="1">
    <citation type="online journal article" date="1998" name="Plant Gene Register">
        <title>Nucleotide sequence of AtDRM1-1 cDNA and genomic clones, an Arabidopsis homologue of a pea dormant bud-associated gene.</title>
        <authorList>
            <person name="Stafstrom J.P."/>
            <person name="Krueger M.T."/>
            <person name="Stoudt W."/>
        </authorList>
        <locator>PGR98-099</locator>
    </citation>
    <scope>NUCLEOTIDE SEQUENCE [GENOMIC DNA]</scope>
    <source>
        <strain>cv. Landsberg erecta</strain>
    </source>
</reference>
<reference evidence="3" key="2">
    <citation type="journal article" date="2000" name="Nature">
        <title>Sequence and analysis of chromosome 1 of the plant Arabidopsis thaliana.</title>
        <authorList>
            <person name="Theologis A."/>
            <person name="Ecker J.R."/>
            <person name="Palm C.J."/>
            <person name="Federspiel N.A."/>
            <person name="Kaul S."/>
            <person name="White O."/>
            <person name="Alonso J."/>
            <person name="Altafi H."/>
            <person name="Araujo R."/>
            <person name="Bowman C.L."/>
            <person name="Brooks S.Y."/>
            <person name="Buehler E."/>
            <person name="Chan A."/>
            <person name="Chao Q."/>
            <person name="Chen H."/>
            <person name="Cheuk R.F."/>
            <person name="Chin C.W."/>
            <person name="Chung M.K."/>
            <person name="Conn L."/>
            <person name="Conway A.B."/>
            <person name="Conway A.R."/>
            <person name="Creasy T.H."/>
            <person name="Dewar K."/>
            <person name="Dunn P."/>
            <person name="Etgu P."/>
            <person name="Feldblyum T.V."/>
            <person name="Feng J.-D."/>
            <person name="Fong B."/>
            <person name="Fujii C.Y."/>
            <person name="Gill J.E."/>
            <person name="Goldsmith A.D."/>
            <person name="Haas B."/>
            <person name="Hansen N.F."/>
            <person name="Hughes B."/>
            <person name="Huizar L."/>
            <person name="Hunter J.L."/>
            <person name="Jenkins J."/>
            <person name="Johnson-Hopson C."/>
            <person name="Khan S."/>
            <person name="Khaykin E."/>
            <person name="Kim C.J."/>
            <person name="Koo H.L."/>
            <person name="Kremenetskaia I."/>
            <person name="Kurtz D.B."/>
            <person name="Kwan A."/>
            <person name="Lam B."/>
            <person name="Langin-Hooper S."/>
            <person name="Lee A."/>
            <person name="Lee J.M."/>
            <person name="Lenz C.A."/>
            <person name="Li J.H."/>
            <person name="Li Y.-P."/>
            <person name="Lin X."/>
            <person name="Liu S.X."/>
            <person name="Liu Z.A."/>
            <person name="Luros J.S."/>
            <person name="Maiti R."/>
            <person name="Marziali A."/>
            <person name="Militscher J."/>
            <person name="Miranda M."/>
            <person name="Nguyen M."/>
            <person name="Nierman W.C."/>
            <person name="Osborne B.I."/>
            <person name="Pai G."/>
            <person name="Peterson J."/>
            <person name="Pham P.K."/>
            <person name="Rizzo M."/>
            <person name="Rooney T."/>
            <person name="Rowley D."/>
            <person name="Sakano H."/>
            <person name="Salzberg S.L."/>
            <person name="Schwartz J.R."/>
            <person name="Shinn P."/>
            <person name="Southwick A.M."/>
            <person name="Sun H."/>
            <person name="Tallon L.J."/>
            <person name="Tambunga G."/>
            <person name="Toriumi M.J."/>
            <person name="Town C.D."/>
            <person name="Utterback T."/>
            <person name="Van Aken S."/>
            <person name="Vaysberg M."/>
            <person name="Vysotskaia V.S."/>
            <person name="Walker M."/>
            <person name="Wu D."/>
            <person name="Yu G."/>
            <person name="Fraser C.M."/>
            <person name="Venter J.C."/>
            <person name="Davis R.W."/>
        </authorList>
    </citation>
    <scope>NUCLEOTIDE SEQUENCE [LARGE SCALE GENOMIC DNA]</scope>
    <source>
        <strain>cv. Columbia</strain>
    </source>
</reference>
<reference key="3">
    <citation type="journal article" date="2017" name="Plant J.">
        <title>Araport11: a complete reannotation of the Arabidopsis thaliana reference genome.</title>
        <authorList>
            <person name="Cheng C.Y."/>
            <person name="Krishnakumar V."/>
            <person name="Chan A.P."/>
            <person name="Thibaud-Nissen F."/>
            <person name="Schobel S."/>
            <person name="Town C.D."/>
        </authorList>
    </citation>
    <scope>GENOME REANNOTATION</scope>
    <source>
        <strain>cv. Columbia</strain>
    </source>
</reference>
<reference key="4">
    <citation type="journal article" date="2006" name="Plant Biotechnol. J.">
        <title>Simultaneous high-throughput recombinational cloning of open reading frames in closed and open configurations.</title>
        <authorList>
            <person name="Underwood B.A."/>
            <person name="Vanderhaeghen R."/>
            <person name="Whitford R."/>
            <person name="Town C.D."/>
            <person name="Hilson P."/>
        </authorList>
    </citation>
    <scope>NUCLEOTIDE SEQUENCE [LARGE SCALE MRNA]</scope>
    <source>
        <strain>cv. Columbia</strain>
    </source>
</reference>
<reference key="5">
    <citation type="journal article" date="2007" name="Plant J.">
        <title>Small cysteine-rich peptides resembling antimicrobial peptides have been under-predicted in plants.</title>
        <authorList>
            <person name="Silverstein K.A.T."/>
            <person name="Moskal W.A. Jr."/>
            <person name="Wu H.C."/>
            <person name="Underwood B.A."/>
            <person name="Graham M.A."/>
            <person name="Town C.D."/>
            <person name="VandenBosch K.A."/>
        </authorList>
    </citation>
    <scope>NUCLEOTIDE SEQUENCE [LARGE SCALE MRNA]</scope>
    <source>
        <strain>cv. Columbia</strain>
    </source>
</reference>
<reference evidence="3" key="6">
    <citation type="journal article" date="2001" name="Plant Mol. Biol.">
        <title>Two large Arabidopsis thaliana gene families are homologous to the Brassica gene superfamily that encodes pollen coat proteins and the male component of the self-incompatibility response.</title>
        <authorList>
            <person name="Vanoosthuyse V."/>
            <person name="Miege C."/>
            <person name="Dumas C."/>
            <person name="Cock J.M."/>
        </authorList>
    </citation>
    <scope>IDENTIFICATION</scope>
</reference>
<reference key="7">
    <citation type="journal article" date="2005" name="Plant Physiol.">
        <title>Genome organization of more than 300 defensin-like genes in Arabidopsis.</title>
        <authorList>
            <person name="Silverstein K.A.T."/>
            <person name="Graham M.A."/>
            <person name="Paape T.D."/>
            <person name="VandenBosch K.A."/>
        </authorList>
    </citation>
    <scope>GENE FAMILY</scope>
</reference>
<evidence type="ECO:0000250" key="1"/>
<evidence type="ECO:0000255" key="2"/>
<evidence type="ECO:0000305" key="3"/>
<proteinExistence type="inferred from homology"/>
<gene>
    <name type="primary">LCR31</name>
    <name type="ordered locus">At1g28335</name>
    <name type="ORF">F3H9</name>
</gene>